<dbReference type="EC" id="3.1.3.11" evidence="1"/>
<dbReference type="EMBL" id="CP000282">
    <property type="protein sequence ID" value="ABD80540.1"/>
    <property type="molecule type" value="Genomic_DNA"/>
</dbReference>
<dbReference type="RefSeq" id="WP_011467760.1">
    <property type="nucleotide sequence ID" value="NC_007912.1"/>
</dbReference>
<dbReference type="SMR" id="Q21L89"/>
<dbReference type="STRING" id="203122.Sde_1278"/>
<dbReference type="GeneID" id="98612955"/>
<dbReference type="KEGG" id="sde:Sde_1278"/>
<dbReference type="eggNOG" id="COG0158">
    <property type="taxonomic scope" value="Bacteria"/>
</dbReference>
<dbReference type="HOGENOM" id="CLU_039977_0_0_6"/>
<dbReference type="OrthoDB" id="9806756at2"/>
<dbReference type="UniPathway" id="UPA00138"/>
<dbReference type="Proteomes" id="UP000001947">
    <property type="component" value="Chromosome"/>
</dbReference>
<dbReference type="GO" id="GO:0005829">
    <property type="term" value="C:cytosol"/>
    <property type="evidence" value="ECO:0007669"/>
    <property type="project" value="TreeGrafter"/>
</dbReference>
<dbReference type="GO" id="GO:0042132">
    <property type="term" value="F:fructose 1,6-bisphosphate 1-phosphatase activity"/>
    <property type="evidence" value="ECO:0007669"/>
    <property type="project" value="UniProtKB-UniRule"/>
</dbReference>
<dbReference type="GO" id="GO:0000287">
    <property type="term" value="F:magnesium ion binding"/>
    <property type="evidence" value="ECO:0007669"/>
    <property type="project" value="UniProtKB-UniRule"/>
</dbReference>
<dbReference type="GO" id="GO:0030388">
    <property type="term" value="P:fructose 1,6-bisphosphate metabolic process"/>
    <property type="evidence" value="ECO:0007669"/>
    <property type="project" value="TreeGrafter"/>
</dbReference>
<dbReference type="GO" id="GO:0006002">
    <property type="term" value="P:fructose 6-phosphate metabolic process"/>
    <property type="evidence" value="ECO:0007669"/>
    <property type="project" value="TreeGrafter"/>
</dbReference>
<dbReference type="GO" id="GO:0006000">
    <property type="term" value="P:fructose metabolic process"/>
    <property type="evidence" value="ECO:0007669"/>
    <property type="project" value="TreeGrafter"/>
</dbReference>
<dbReference type="GO" id="GO:0006094">
    <property type="term" value="P:gluconeogenesis"/>
    <property type="evidence" value="ECO:0007669"/>
    <property type="project" value="UniProtKB-UniRule"/>
</dbReference>
<dbReference type="GO" id="GO:0005986">
    <property type="term" value="P:sucrose biosynthetic process"/>
    <property type="evidence" value="ECO:0007669"/>
    <property type="project" value="TreeGrafter"/>
</dbReference>
<dbReference type="CDD" id="cd00354">
    <property type="entry name" value="FBPase"/>
    <property type="match status" value="1"/>
</dbReference>
<dbReference type="FunFam" id="3.40.190.80:FF:000011">
    <property type="entry name" value="Fructose-1,6-bisphosphatase class 1"/>
    <property type="match status" value="1"/>
</dbReference>
<dbReference type="Gene3D" id="3.40.190.80">
    <property type="match status" value="1"/>
</dbReference>
<dbReference type="Gene3D" id="3.30.540.10">
    <property type="entry name" value="Fructose-1,6-Bisphosphatase, subunit A, domain 1"/>
    <property type="match status" value="1"/>
</dbReference>
<dbReference type="HAMAP" id="MF_01855">
    <property type="entry name" value="FBPase_class1"/>
    <property type="match status" value="1"/>
</dbReference>
<dbReference type="InterPro" id="IPR044015">
    <property type="entry name" value="FBPase_C_dom"/>
</dbReference>
<dbReference type="InterPro" id="IPR000146">
    <property type="entry name" value="FBPase_class-1"/>
</dbReference>
<dbReference type="InterPro" id="IPR033391">
    <property type="entry name" value="FBPase_N"/>
</dbReference>
<dbReference type="InterPro" id="IPR028343">
    <property type="entry name" value="FBPtase"/>
</dbReference>
<dbReference type="InterPro" id="IPR020548">
    <property type="entry name" value="Fructose_bisphosphatase_AS"/>
</dbReference>
<dbReference type="NCBIfam" id="NF006779">
    <property type="entry name" value="PRK09293.1-3"/>
    <property type="match status" value="1"/>
</dbReference>
<dbReference type="PANTHER" id="PTHR11556">
    <property type="entry name" value="FRUCTOSE-1,6-BISPHOSPHATASE-RELATED"/>
    <property type="match status" value="1"/>
</dbReference>
<dbReference type="PANTHER" id="PTHR11556:SF35">
    <property type="entry name" value="SEDOHEPTULOSE-1,7-BISPHOSPHATASE, CHLOROPLASTIC"/>
    <property type="match status" value="1"/>
</dbReference>
<dbReference type="Pfam" id="PF00316">
    <property type="entry name" value="FBPase"/>
    <property type="match status" value="1"/>
</dbReference>
<dbReference type="Pfam" id="PF18913">
    <property type="entry name" value="FBPase_C"/>
    <property type="match status" value="1"/>
</dbReference>
<dbReference type="PIRSF" id="PIRSF500210">
    <property type="entry name" value="FBPtase"/>
    <property type="match status" value="1"/>
</dbReference>
<dbReference type="PIRSF" id="PIRSF000904">
    <property type="entry name" value="FBPtase_SBPase"/>
    <property type="match status" value="1"/>
</dbReference>
<dbReference type="PRINTS" id="PR00115">
    <property type="entry name" value="F16BPHPHTASE"/>
</dbReference>
<dbReference type="SUPFAM" id="SSF56655">
    <property type="entry name" value="Carbohydrate phosphatase"/>
    <property type="match status" value="1"/>
</dbReference>
<dbReference type="PROSITE" id="PS00124">
    <property type="entry name" value="FBPASE"/>
    <property type="match status" value="1"/>
</dbReference>
<organism>
    <name type="scientific">Saccharophagus degradans (strain 2-40 / ATCC 43961 / DSM 17024)</name>
    <dbReference type="NCBI Taxonomy" id="203122"/>
    <lineage>
        <taxon>Bacteria</taxon>
        <taxon>Pseudomonadati</taxon>
        <taxon>Pseudomonadota</taxon>
        <taxon>Gammaproteobacteria</taxon>
        <taxon>Cellvibrionales</taxon>
        <taxon>Cellvibrionaceae</taxon>
        <taxon>Saccharophagus</taxon>
    </lineage>
</organism>
<sequence>MQNLQGMLRDQRVAQDLQEVIFSIELACKDIAKKVQLGALAGVLGATESENVQGETQKKLDVISNDILKASLAANSNVLALASEEEDNVVAANAGGRYVVAFDPLDGSSNIDINGQIGTIFTIFEALDGVAANSGKHFLQQGNKQVCAGYVLYGASTLMVITVDGPTSCLTLDPATQTFSLTNTALQVPDQTQEFAVNLANERFWLPKFKSYVADLKLGEEGVRGKRFNMRWNASMVGDVHRVLMRGGIFMYPSDTRNPKQPAKLRLLYEANPMALLIERAGGKAFNETQRILDVTPCALHERIAVILGSEQEVATCLEYLN</sequence>
<comment type="catalytic activity">
    <reaction evidence="1">
        <text>beta-D-fructose 1,6-bisphosphate + H2O = beta-D-fructose 6-phosphate + phosphate</text>
        <dbReference type="Rhea" id="RHEA:11064"/>
        <dbReference type="ChEBI" id="CHEBI:15377"/>
        <dbReference type="ChEBI" id="CHEBI:32966"/>
        <dbReference type="ChEBI" id="CHEBI:43474"/>
        <dbReference type="ChEBI" id="CHEBI:57634"/>
        <dbReference type="EC" id="3.1.3.11"/>
    </reaction>
</comment>
<comment type="cofactor">
    <cofactor evidence="1">
        <name>Mg(2+)</name>
        <dbReference type="ChEBI" id="CHEBI:18420"/>
    </cofactor>
    <text evidence="1">Binds 2 magnesium ions per subunit.</text>
</comment>
<comment type="pathway">
    <text evidence="1">Carbohydrate biosynthesis; gluconeogenesis.</text>
</comment>
<comment type="subunit">
    <text evidence="1">Homotetramer.</text>
</comment>
<comment type="subcellular location">
    <subcellularLocation>
        <location evidence="1">Cytoplasm</location>
    </subcellularLocation>
</comment>
<comment type="similarity">
    <text evidence="1">Belongs to the FBPase class 1 family.</text>
</comment>
<evidence type="ECO:0000255" key="1">
    <source>
        <dbReference type="HAMAP-Rule" id="MF_01855"/>
    </source>
</evidence>
<proteinExistence type="inferred from homology"/>
<accession>Q21L89</accession>
<feature type="chain" id="PRO_0000364681" description="Fructose-1,6-bisphosphatase class 1">
    <location>
        <begin position="1"/>
        <end position="322"/>
    </location>
</feature>
<feature type="binding site" evidence="1">
    <location>
        <position position="84"/>
    </location>
    <ligand>
        <name>Mg(2+)</name>
        <dbReference type="ChEBI" id="CHEBI:18420"/>
        <label>1</label>
    </ligand>
</feature>
<feature type="binding site" evidence="1">
    <location>
        <position position="103"/>
    </location>
    <ligand>
        <name>Mg(2+)</name>
        <dbReference type="ChEBI" id="CHEBI:18420"/>
        <label>1</label>
    </ligand>
</feature>
<feature type="binding site" evidence="1">
    <location>
        <position position="103"/>
    </location>
    <ligand>
        <name>Mg(2+)</name>
        <dbReference type="ChEBI" id="CHEBI:18420"/>
        <label>2</label>
    </ligand>
</feature>
<feature type="binding site" evidence="1">
    <location>
        <position position="105"/>
    </location>
    <ligand>
        <name>Mg(2+)</name>
        <dbReference type="ChEBI" id="CHEBI:18420"/>
        <label>1</label>
    </ligand>
</feature>
<feature type="binding site" evidence="1">
    <location>
        <begin position="106"/>
        <end position="109"/>
    </location>
    <ligand>
        <name>substrate</name>
    </ligand>
</feature>
<feature type="binding site" evidence="1">
    <location>
        <position position="106"/>
    </location>
    <ligand>
        <name>Mg(2+)</name>
        <dbReference type="ChEBI" id="CHEBI:18420"/>
        <label>2</label>
    </ligand>
</feature>
<feature type="binding site" evidence="1">
    <location>
        <position position="198"/>
    </location>
    <ligand>
        <name>substrate</name>
    </ligand>
</feature>
<feature type="binding site" evidence="1">
    <location>
        <position position="264"/>
    </location>
    <ligand>
        <name>substrate</name>
    </ligand>
</feature>
<feature type="binding site" evidence="1">
    <location>
        <position position="270"/>
    </location>
    <ligand>
        <name>Mg(2+)</name>
        <dbReference type="ChEBI" id="CHEBI:18420"/>
        <label>2</label>
    </ligand>
</feature>
<name>F16PA_SACD2</name>
<reference key="1">
    <citation type="journal article" date="2008" name="PLoS Genet.">
        <title>Complete genome sequence of the complex carbohydrate-degrading marine bacterium, Saccharophagus degradans strain 2-40 T.</title>
        <authorList>
            <person name="Weiner R.M."/>
            <person name="Taylor L.E. II"/>
            <person name="Henrissat B."/>
            <person name="Hauser L."/>
            <person name="Land M."/>
            <person name="Coutinho P.M."/>
            <person name="Rancurel C."/>
            <person name="Saunders E.H."/>
            <person name="Longmire A.G."/>
            <person name="Zhang H."/>
            <person name="Bayer E.A."/>
            <person name="Gilbert H.J."/>
            <person name="Larimer F."/>
            <person name="Zhulin I.B."/>
            <person name="Ekborg N.A."/>
            <person name="Lamed R."/>
            <person name="Richardson P.M."/>
            <person name="Borovok I."/>
            <person name="Hutcheson S."/>
        </authorList>
    </citation>
    <scope>NUCLEOTIDE SEQUENCE [LARGE SCALE GENOMIC DNA]</scope>
    <source>
        <strain>2-40 / ATCC 43961 / DSM 17024</strain>
    </source>
</reference>
<protein>
    <recommendedName>
        <fullName evidence="1">Fructose-1,6-bisphosphatase class 1</fullName>
        <shortName evidence="1">FBPase class 1</shortName>
        <ecNumber evidence="1">3.1.3.11</ecNumber>
    </recommendedName>
    <alternativeName>
        <fullName evidence="1">D-fructose-1,6-bisphosphate 1-phosphohydrolase class 1</fullName>
    </alternativeName>
</protein>
<gene>
    <name evidence="1" type="primary">fbp</name>
    <name type="ordered locus">Sde_1278</name>
</gene>
<keyword id="KW-0119">Carbohydrate metabolism</keyword>
<keyword id="KW-0963">Cytoplasm</keyword>
<keyword id="KW-0378">Hydrolase</keyword>
<keyword id="KW-0460">Magnesium</keyword>
<keyword id="KW-0479">Metal-binding</keyword>
<keyword id="KW-1185">Reference proteome</keyword>